<name>PIGM_DICDI</name>
<proteinExistence type="inferred from homology"/>
<organism>
    <name type="scientific">Dictyostelium discoideum</name>
    <name type="common">Social amoeba</name>
    <dbReference type="NCBI Taxonomy" id="44689"/>
    <lineage>
        <taxon>Eukaryota</taxon>
        <taxon>Amoebozoa</taxon>
        <taxon>Evosea</taxon>
        <taxon>Eumycetozoa</taxon>
        <taxon>Dictyostelia</taxon>
        <taxon>Dictyosteliales</taxon>
        <taxon>Dictyosteliaceae</taxon>
        <taxon>Dictyostelium</taxon>
    </lineage>
</organism>
<protein>
    <recommendedName>
        <fullName>GPI mannosyltransferase 1</fullName>
        <ecNumber>2.4.1.-</ecNumber>
    </recommendedName>
    <alternativeName>
        <fullName>GPI mannosyltransferase I</fullName>
        <shortName>GPI-MT-I</shortName>
    </alternativeName>
    <alternativeName>
        <fullName>Phosphatidylinositol-glycan biosynthesis class M protein</fullName>
        <shortName>PIG-M</shortName>
    </alternativeName>
</protein>
<reference key="1">
    <citation type="journal article" date="2005" name="Nature">
        <title>The genome of the social amoeba Dictyostelium discoideum.</title>
        <authorList>
            <person name="Eichinger L."/>
            <person name="Pachebat J.A."/>
            <person name="Gloeckner G."/>
            <person name="Rajandream M.A."/>
            <person name="Sucgang R."/>
            <person name="Berriman M."/>
            <person name="Song J."/>
            <person name="Olsen R."/>
            <person name="Szafranski K."/>
            <person name="Xu Q."/>
            <person name="Tunggal B."/>
            <person name="Kummerfeld S."/>
            <person name="Madera M."/>
            <person name="Konfortov B.A."/>
            <person name="Rivero F."/>
            <person name="Bankier A.T."/>
            <person name="Lehmann R."/>
            <person name="Hamlin N."/>
            <person name="Davies R."/>
            <person name="Gaudet P."/>
            <person name="Fey P."/>
            <person name="Pilcher K."/>
            <person name="Chen G."/>
            <person name="Saunders D."/>
            <person name="Sodergren E.J."/>
            <person name="Davis P."/>
            <person name="Kerhornou A."/>
            <person name="Nie X."/>
            <person name="Hall N."/>
            <person name="Anjard C."/>
            <person name="Hemphill L."/>
            <person name="Bason N."/>
            <person name="Farbrother P."/>
            <person name="Desany B."/>
            <person name="Just E."/>
            <person name="Morio T."/>
            <person name="Rost R."/>
            <person name="Churcher C.M."/>
            <person name="Cooper J."/>
            <person name="Haydock S."/>
            <person name="van Driessche N."/>
            <person name="Cronin A."/>
            <person name="Goodhead I."/>
            <person name="Muzny D.M."/>
            <person name="Mourier T."/>
            <person name="Pain A."/>
            <person name="Lu M."/>
            <person name="Harper D."/>
            <person name="Lindsay R."/>
            <person name="Hauser H."/>
            <person name="James K.D."/>
            <person name="Quiles M."/>
            <person name="Madan Babu M."/>
            <person name="Saito T."/>
            <person name="Buchrieser C."/>
            <person name="Wardroper A."/>
            <person name="Felder M."/>
            <person name="Thangavelu M."/>
            <person name="Johnson D."/>
            <person name="Knights A."/>
            <person name="Loulseged H."/>
            <person name="Mungall K.L."/>
            <person name="Oliver K."/>
            <person name="Price C."/>
            <person name="Quail M.A."/>
            <person name="Urushihara H."/>
            <person name="Hernandez J."/>
            <person name="Rabbinowitsch E."/>
            <person name="Steffen D."/>
            <person name="Sanders M."/>
            <person name="Ma J."/>
            <person name="Kohara Y."/>
            <person name="Sharp S."/>
            <person name="Simmonds M.N."/>
            <person name="Spiegler S."/>
            <person name="Tivey A."/>
            <person name="Sugano S."/>
            <person name="White B."/>
            <person name="Walker D."/>
            <person name="Woodward J.R."/>
            <person name="Winckler T."/>
            <person name="Tanaka Y."/>
            <person name="Shaulsky G."/>
            <person name="Schleicher M."/>
            <person name="Weinstock G.M."/>
            <person name="Rosenthal A."/>
            <person name="Cox E.C."/>
            <person name="Chisholm R.L."/>
            <person name="Gibbs R.A."/>
            <person name="Loomis W.F."/>
            <person name="Platzer M."/>
            <person name="Kay R.R."/>
            <person name="Williams J.G."/>
            <person name="Dear P.H."/>
            <person name="Noegel A.A."/>
            <person name="Barrell B.G."/>
            <person name="Kuspa A."/>
        </authorList>
    </citation>
    <scope>NUCLEOTIDE SEQUENCE [LARGE SCALE GENOMIC DNA]</scope>
    <source>
        <strain>AX4</strain>
    </source>
</reference>
<gene>
    <name type="primary">pigm</name>
    <name type="ORF">DDB_G0288899</name>
</gene>
<comment type="function">
    <text evidence="1">Mannosyltransferase involved in glycosylphosphatidylinositol-anchor biosynthesis. Transfers the first alpha-1,4-mannose to GlcN-acyl-PI during GPI precursor assembly (By similarity).</text>
</comment>
<comment type="pathway">
    <text>Glycolipid biosynthesis; glycosylphosphatidylinositol-anchor biosynthesis.</text>
</comment>
<comment type="subcellular location">
    <subcellularLocation>
        <location evidence="1">Endoplasmic reticulum membrane</location>
        <topology evidence="1">Multi-pass membrane protein</topology>
    </subcellularLocation>
</comment>
<comment type="similarity">
    <text evidence="3">Belongs to the PIGM family.</text>
</comment>
<dbReference type="EC" id="2.4.1.-"/>
<dbReference type="EMBL" id="AAFI02000126">
    <property type="protein sequence ID" value="EAL62973.1"/>
    <property type="molecule type" value="Genomic_DNA"/>
</dbReference>
<dbReference type="RefSeq" id="XP_636475.1">
    <property type="nucleotide sequence ID" value="XM_631383.1"/>
</dbReference>
<dbReference type="FunCoup" id="Q54IA4">
    <property type="interactions" value="477"/>
</dbReference>
<dbReference type="STRING" id="44689.Q54IA4"/>
<dbReference type="PaxDb" id="44689-DDB0231706"/>
<dbReference type="EnsemblProtists" id="EAL62973">
    <property type="protein sequence ID" value="EAL62973"/>
    <property type="gene ID" value="DDB_G0288899"/>
</dbReference>
<dbReference type="GeneID" id="8626858"/>
<dbReference type="KEGG" id="ddi:DDB_G0288899"/>
<dbReference type="dictyBase" id="DDB_G0288899">
    <property type="gene designation" value="pigM"/>
</dbReference>
<dbReference type="VEuPathDB" id="AmoebaDB:DDB_G0288899"/>
<dbReference type="eggNOG" id="KOG3893">
    <property type="taxonomic scope" value="Eukaryota"/>
</dbReference>
<dbReference type="HOGENOM" id="CLU_024220_3_1_1"/>
<dbReference type="InParanoid" id="Q54IA4"/>
<dbReference type="OMA" id="MLWFIGQ"/>
<dbReference type="PhylomeDB" id="Q54IA4"/>
<dbReference type="Reactome" id="R-DDI-162710">
    <property type="pathway name" value="Synthesis of glycosylphosphatidylinositol (GPI)"/>
</dbReference>
<dbReference type="UniPathway" id="UPA00196"/>
<dbReference type="PRO" id="PR:Q54IA4"/>
<dbReference type="Proteomes" id="UP000002195">
    <property type="component" value="Chromosome 5"/>
</dbReference>
<dbReference type="GO" id="GO:0005789">
    <property type="term" value="C:endoplasmic reticulum membrane"/>
    <property type="evidence" value="ECO:0007669"/>
    <property type="project" value="UniProtKB-SubCell"/>
</dbReference>
<dbReference type="GO" id="GO:1990529">
    <property type="term" value="C:glycosylphosphatidylinositol-mannosyltransferase I complex"/>
    <property type="evidence" value="ECO:0000318"/>
    <property type="project" value="GO_Central"/>
</dbReference>
<dbReference type="GO" id="GO:0051751">
    <property type="term" value="F:alpha-1,4-mannosyltransferase activity"/>
    <property type="evidence" value="ECO:0007669"/>
    <property type="project" value="InterPro"/>
</dbReference>
<dbReference type="GO" id="GO:0004376">
    <property type="term" value="F:glycolipid mannosyltransferase activity"/>
    <property type="evidence" value="ECO:0007669"/>
    <property type="project" value="InterPro"/>
</dbReference>
<dbReference type="GO" id="GO:0000030">
    <property type="term" value="F:mannosyltransferase activity"/>
    <property type="evidence" value="ECO:0000318"/>
    <property type="project" value="GO_Central"/>
</dbReference>
<dbReference type="GO" id="GO:0006506">
    <property type="term" value="P:GPI anchor biosynthetic process"/>
    <property type="evidence" value="ECO:0000318"/>
    <property type="project" value="GO_Central"/>
</dbReference>
<dbReference type="InterPro" id="IPR007704">
    <property type="entry name" value="PIG-M"/>
</dbReference>
<dbReference type="PANTHER" id="PTHR12886:SF0">
    <property type="entry name" value="GPI MANNOSYLTRANSFERASE 1"/>
    <property type="match status" value="1"/>
</dbReference>
<dbReference type="PANTHER" id="PTHR12886">
    <property type="entry name" value="PIG-M MANNOSYLTRANSFERASE"/>
    <property type="match status" value="1"/>
</dbReference>
<dbReference type="Pfam" id="PF05007">
    <property type="entry name" value="Mannosyl_trans"/>
    <property type="match status" value="1"/>
</dbReference>
<sequence>MTRVKTVMTNENNKYDFIFKGINLTKSIFIVGLVIRLVLIVFAEWQDANMLVKYTDIDYVVYTDASRAVVNGLSPYDRSTYRYTPLLAYLLVPNILIHPAFGKLLFVICDMIIAYLLKGILLERFPKITSRTLLICLASWLLNPFSINVSTRGNAESVIGAMVLASFYFLTKKNLTLASIFYGLSVHFKIYPIIYSIPMYLYIDENFFSRKPSEYTSLNNNFKNIFKNFFNKNRLKFFLISAFTFISLTFIMYLIYGYIFLFETYLYHVIRADNRHNFSVYFYQIYLNTPIVETVGDLVGKVNGSNMIVALASFLPQVILLLAITLVYFNDLEFCLLLETITFVAFNKVCTVQYFIWYYSILPLVIPSSSLGLVQYIILFAVWMGSQGLWFYSAFNLEFLGLQTFWNIWVAGLLFFIANIYILVKLILNHNPIKVNQYLKSK</sequence>
<evidence type="ECO:0000250" key="1"/>
<evidence type="ECO:0000255" key="2"/>
<evidence type="ECO:0000305" key="3"/>
<keyword id="KW-0256">Endoplasmic reticulum</keyword>
<keyword id="KW-0328">Glycosyltransferase</keyword>
<keyword id="KW-0337">GPI-anchor biosynthesis</keyword>
<keyword id="KW-0472">Membrane</keyword>
<keyword id="KW-1185">Reference proteome</keyword>
<keyword id="KW-0808">Transferase</keyword>
<keyword id="KW-0812">Transmembrane</keyword>
<keyword id="KW-1133">Transmembrane helix</keyword>
<feature type="chain" id="PRO_0000329304" description="GPI mannosyltransferase 1">
    <location>
        <begin position="1"/>
        <end position="442"/>
    </location>
</feature>
<feature type="transmembrane region" description="Helical" evidence="2">
    <location>
        <begin position="22"/>
        <end position="42"/>
    </location>
</feature>
<feature type="transmembrane region" description="Helical" evidence="2">
    <location>
        <begin position="95"/>
        <end position="115"/>
    </location>
</feature>
<feature type="transmembrane region" description="Helical" evidence="2">
    <location>
        <begin position="177"/>
        <end position="197"/>
    </location>
</feature>
<feature type="transmembrane region" description="Helical" evidence="2">
    <location>
        <begin position="242"/>
        <end position="262"/>
    </location>
</feature>
<feature type="transmembrane region" description="Helical" evidence="2">
    <location>
        <begin position="307"/>
        <end position="327"/>
    </location>
</feature>
<feature type="transmembrane region" description="Helical" evidence="2">
    <location>
        <begin position="336"/>
        <end position="356"/>
    </location>
</feature>
<feature type="transmembrane region" description="Helical" evidence="2">
    <location>
        <begin position="361"/>
        <end position="381"/>
    </location>
</feature>
<feature type="transmembrane region" description="Helical" evidence="2">
    <location>
        <begin position="408"/>
        <end position="428"/>
    </location>
</feature>
<accession>Q54IA4</accession>